<comment type="function">
    <text evidence="1">Required for secretion of EsxA (ESAT-6) and EsxB (CFP-10) and for virulence.</text>
</comment>
<comment type="subunit">
    <text evidence="1">Homodimer; disulfide-linked.</text>
</comment>
<comment type="subcellular location">
    <subcellularLocation>
        <location evidence="1">Secreted</location>
    </subcellularLocation>
    <text evidence="1">Secreted via the ESX-1 / type VII secretion system (T7SS).</text>
</comment>
<feature type="chain" id="PRO_0000427846" description="ESX-1 secretion-associated protein EspA">
    <location>
        <begin position="1"/>
        <end position="392"/>
    </location>
</feature>
<feature type="region of interest" description="Disordered" evidence="2">
    <location>
        <begin position="302"/>
        <end position="392"/>
    </location>
</feature>
<feature type="compositionally biased region" description="Gly residues" evidence="2">
    <location>
        <begin position="334"/>
        <end position="344"/>
    </location>
</feature>
<feature type="disulfide bond" description="Interchain" evidence="1">
    <location>
        <position position="138"/>
    </location>
</feature>
<evidence type="ECO:0000250" key="1">
    <source>
        <dbReference type="UniProtKB" id="P9WJE1"/>
    </source>
</evidence>
<evidence type="ECO:0000256" key="2">
    <source>
        <dbReference type="SAM" id="MobiDB-lite"/>
    </source>
</evidence>
<reference key="1">
    <citation type="journal article" date="2002" name="J. Bacteriol.">
        <title>Whole-genome comparison of Mycobacterium tuberculosis clinical and laboratory strains.</title>
        <authorList>
            <person name="Fleischmann R.D."/>
            <person name="Alland D."/>
            <person name="Eisen J.A."/>
            <person name="Carpenter L."/>
            <person name="White O."/>
            <person name="Peterson J.D."/>
            <person name="DeBoy R.T."/>
            <person name="Dodson R.J."/>
            <person name="Gwinn M.L."/>
            <person name="Haft D.H."/>
            <person name="Hickey E.K."/>
            <person name="Kolonay J.F."/>
            <person name="Nelson W.C."/>
            <person name="Umayam L.A."/>
            <person name="Ermolaeva M.D."/>
            <person name="Salzberg S.L."/>
            <person name="Delcher A."/>
            <person name="Utterback T.R."/>
            <person name="Weidman J.F."/>
            <person name="Khouri H.M."/>
            <person name="Gill J."/>
            <person name="Mikula A."/>
            <person name="Bishai W."/>
            <person name="Jacobs W.R. Jr."/>
            <person name="Venter J.C."/>
            <person name="Fraser C.M."/>
        </authorList>
    </citation>
    <scope>NUCLEOTIDE SEQUENCE [LARGE SCALE GENOMIC DNA]</scope>
    <source>
        <strain>CDC 1551 / Oshkosh</strain>
    </source>
</reference>
<proteinExistence type="inferred from homology"/>
<organism>
    <name type="scientific">Mycobacterium tuberculosis (strain CDC 1551 / Oshkosh)</name>
    <dbReference type="NCBI Taxonomy" id="83331"/>
    <lineage>
        <taxon>Bacteria</taxon>
        <taxon>Bacillati</taxon>
        <taxon>Actinomycetota</taxon>
        <taxon>Actinomycetes</taxon>
        <taxon>Mycobacteriales</taxon>
        <taxon>Mycobacteriaceae</taxon>
        <taxon>Mycobacterium</taxon>
        <taxon>Mycobacterium tuberculosis complex</taxon>
    </lineage>
</organism>
<accession>P9WJE0</accession>
<accession>L0TDB5</accession>
<accession>O06267</accession>
<accession>Q7D572</accession>
<protein>
    <recommendedName>
        <fullName evidence="1">ESX-1 secretion-associated protein EspA</fullName>
    </recommendedName>
</protein>
<name>ESPA_MYCTO</name>
<gene>
    <name evidence="1" type="primary">espA</name>
    <name type="ordered locus">MT3718</name>
</gene>
<dbReference type="EMBL" id="AE000516">
    <property type="protein sequence ID" value="AAK48077.1"/>
    <property type="molecule type" value="Genomic_DNA"/>
</dbReference>
<dbReference type="PIR" id="A70957">
    <property type="entry name" value="A70957"/>
</dbReference>
<dbReference type="RefSeq" id="WP_003419551.1">
    <property type="nucleotide sequence ID" value="NZ_KK341227.1"/>
</dbReference>
<dbReference type="GeneID" id="45427602"/>
<dbReference type="KEGG" id="mtc:MT3718"/>
<dbReference type="PATRIC" id="fig|83331.31.peg.4002"/>
<dbReference type="HOGENOM" id="CLU_795740_0_0_11"/>
<dbReference type="Proteomes" id="UP000001020">
    <property type="component" value="Chromosome"/>
</dbReference>
<dbReference type="GO" id="GO:0005576">
    <property type="term" value="C:extracellular region"/>
    <property type="evidence" value="ECO:0007669"/>
    <property type="project" value="UniProtKB-SubCell"/>
</dbReference>
<dbReference type="InterPro" id="IPR043796">
    <property type="entry name" value="ESX-1_EspA/EspE-like"/>
</dbReference>
<dbReference type="Pfam" id="PF18879">
    <property type="entry name" value="EspA_EspE"/>
    <property type="match status" value="1"/>
</dbReference>
<keyword id="KW-1015">Disulfide bond</keyword>
<keyword id="KW-1185">Reference proteome</keyword>
<keyword id="KW-0964">Secreted</keyword>
<keyword id="KW-0843">Virulence</keyword>
<sequence>MSRAFIIDPTISAIDGLYDLLGIGIPNQGGILYSSLEYFEKALEELAAAFPGDGWLGSAADKYAGKNRNHVNFFQELADLDRQLISLIHDQANAVQTTRDILEGAKKGLEFVRPVAVDLTYIPVVGHALSAAFQAPFCAGAMAVVGGALAYLVVKTLINATQLLKLLAKLAELVAAAIADIISDVADIIKGILGEVWEFITNALNGLKELWDKLTGWVTGLFSRGWSNLESFFAGVPGLTGATSGLSQVTGLFGAAGLSASSGLAHADSLASSASLPALAGIGGGSGFGGLPSLAQVHAASTRQALRPRADGPVGAAAEQVGGQSQLVSAQGSQGMGGPVGMGGMHPSSGASKGTTTKKYSEGAAAGTEDAERAPVEADAGGGQKVLVRNVV</sequence>